<sequence length="581" mass="63301">MVISVPLFSSVLLALVVAVPADFDVGGRLLGVGLCSVRGDPNEHYDPHGDLYLRPFLQLDSVHQFYSLVFARKASSAMGASTSTKRPLTSKVTNEGENDRVKYASSAMQGLRMSMQDALAVELDLDALKSTSFFGVYDGHGGAEVAMYCAKRFHVMLREEESFLNNLSYAITSVCSRLDDELEAPNVWRASLYPHRSSESSSESSDCFQFLSTGSCANVWRSSEAVSYKLPSYEGSTACVVIIRGNQITVGNVGDSRCVLSKNGQAIDLSTDHKPNVPLERQRILRVGGQVWREKFPAKDSGGEIREQWGPYCIEGKLSTSRALAGIFLTTISGDFAYKNIVYRPQYQMVTHFPDIRVAKITGDTEFLVIASDGICSIQILIVDLNTFFPFRDHMSSQDVVDFVHEKLNSRRQELCQSLINQGKKRECFTEDSQLATNKNIAPNTTTLGEETLHTTCEKLVENCLESRNNATAILVQFKPGADQPIPALPNIQEGSDEVAGGADQPIPVLPNIQQVSDEVAGGTGQPIPVLPDIQEGSDEVAGGAAVAEQHQHNPEGGGEQQLDLDDALDGEALALLFGQP</sequence>
<evidence type="ECO:0000250" key="1"/>
<evidence type="ECO:0000255" key="2"/>
<evidence type="ECO:0000255" key="3">
    <source>
        <dbReference type="PROSITE-ProRule" id="PRU01082"/>
    </source>
</evidence>
<evidence type="ECO:0000256" key="4">
    <source>
        <dbReference type="SAM" id="MobiDB-lite"/>
    </source>
</evidence>
<evidence type="ECO:0000305" key="5"/>
<reference key="1">
    <citation type="journal article" date="2005" name="Nature">
        <title>The map-based sequence of the rice genome.</title>
        <authorList>
            <consortium name="International rice genome sequencing project (IRGSP)"/>
        </authorList>
    </citation>
    <scope>NUCLEOTIDE SEQUENCE [LARGE SCALE GENOMIC DNA]</scope>
    <source>
        <strain>cv. Nipponbare</strain>
    </source>
</reference>
<reference key="2">
    <citation type="journal article" date="2013" name="Rice">
        <title>Improvement of the Oryza sativa Nipponbare reference genome using next generation sequence and optical map data.</title>
        <authorList>
            <person name="Kawahara Y."/>
            <person name="de la Bastide M."/>
            <person name="Hamilton J.P."/>
            <person name="Kanamori H."/>
            <person name="McCombie W.R."/>
            <person name="Ouyang S."/>
            <person name="Schwartz D.C."/>
            <person name="Tanaka T."/>
            <person name="Wu J."/>
            <person name="Zhou S."/>
            <person name="Childs K.L."/>
            <person name="Davidson R.M."/>
            <person name="Lin H."/>
            <person name="Quesada-Ocampo L."/>
            <person name="Vaillancourt B."/>
            <person name="Sakai H."/>
            <person name="Lee S.S."/>
            <person name="Kim J."/>
            <person name="Numa H."/>
            <person name="Itoh T."/>
            <person name="Buell C.R."/>
            <person name="Matsumoto T."/>
        </authorList>
    </citation>
    <scope>GENOME REANNOTATION</scope>
    <source>
        <strain>cv. Nipponbare</strain>
    </source>
</reference>
<reference key="3">
    <citation type="journal article" date="2005" name="PLoS Biol.">
        <title>The genomes of Oryza sativa: a history of duplications.</title>
        <authorList>
            <person name="Yu J."/>
            <person name="Wang J."/>
            <person name="Lin W."/>
            <person name="Li S."/>
            <person name="Li H."/>
            <person name="Zhou J."/>
            <person name="Ni P."/>
            <person name="Dong W."/>
            <person name="Hu S."/>
            <person name="Zeng C."/>
            <person name="Zhang J."/>
            <person name="Zhang Y."/>
            <person name="Li R."/>
            <person name="Xu Z."/>
            <person name="Li S."/>
            <person name="Li X."/>
            <person name="Zheng H."/>
            <person name="Cong L."/>
            <person name="Lin L."/>
            <person name="Yin J."/>
            <person name="Geng J."/>
            <person name="Li G."/>
            <person name="Shi J."/>
            <person name="Liu J."/>
            <person name="Lv H."/>
            <person name="Li J."/>
            <person name="Wang J."/>
            <person name="Deng Y."/>
            <person name="Ran L."/>
            <person name="Shi X."/>
            <person name="Wang X."/>
            <person name="Wu Q."/>
            <person name="Li C."/>
            <person name="Ren X."/>
            <person name="Wang J."/>
            <person name="Wang X."/>
            <person name="Li D."/>
            <person name="Liu D."/>
            <person name="Zhang X."/>
            <person name="Ji Z."/>
            <person name="Zhao W."/>
            <person name="Sun Y."/>
            <person name="Zhang Z."/>
            <person name="Bao J."/>
            <person name="Han Y."/>
            <person name="Dong L."/>
            <person name="Ji J."/>
            <person name="Chen P."/>
            <person name="Wu S."/>
            <person name="Liu J."/>
            <person name="Xiao Y."/>
            <person name="Bu D."/>
            <person name="Tan J."/>
            <person name="Yang L."/>
            <person name="Ye C."/>
            <person name="Zhang J."/>
            <person name="Xu J."/>
            <person name="Zhou Y."/>
            <person name="Yu Y."/>
            <person name="Zhang B."/>
            <person name="Zhuang S."/>
            <person name="Wei H."/>
            <person name="Liu B."/>
            <person name="Lei M."/>
            <person name="Yu H."/>
            <person name="Li Y."/>
            <person name="Xu H."/>
            <person name="Wei S."/>
            <person name="He X."/>
            <person name="Fang L."/>
            <person name="Zhang Z."/>
            <person name="Zhang Y."/>
            <person name="Huang X."/>
            <person name="Su Z."/>
            <person name="Tong W."/>
            <person name="Li J."/>
            <person name="Tong Z."/>
            <person name="Li S."/>
            <person name="Ye J."/>
            <person name="Wang L."/>
            <person name="Fang L."/>
            <person name="Lei T."/>
            <person name="Chen C.-S."/>
            <person name="Chen H.-C."/>
            <person name="Xu Z."/>
            <person name="Li H."/>
            <person name="Huang H."/>
            <person name="Zhang F."/>
            <person name="Xu H."/>
            <person name="Li N."/>
            <person name="Zhao C."/>
            <person name="Li S."/>
            <person name="Dong L."/>
            <person name="Huang Y."/>
            <person name="Li L."/>
            <person name="Xi Y."/>
            <person name="Qi Q."/>
            <person name="Li W."/>
            <person name="Zhang B."/>
            <person name="Hu W."/>
            <person name="Zhang Y."/>
            <person name="Tian X."/>
            <person name="Jiao Y."/>
            <person name="Liang X."/>
            <person name="Jin J."/>
            <person name="Gao L."/>
            <person name="Zheng W."/>
            <person name="Hao B."/>
            <person name="Liu S.-M."/>
            <person name="Wang W."/>
            <person name="Yuan L."/>
            <person name="Cao M."/>
            <person name="McDermott J."/>
            <person name="Samudrala R."/>
            <person name="Wang J."/>
            <person name="Wong G.K.-S."/>
            <person name="Yang H."/>
        </authorList>
    </citation>
    <scope>NUCLEOTIDE SEQUENCE [LARGE SCALE GENOMIC DNA]</scope>
    <source>
        <strain>cv. Nipponbare</strain>
    </source>
</reference>
<reference key="4">
    <citation type="journal article" date="2008" name="BMC Genomics">
        <title>Genome-wide and expression analysis of protein phosphatase 2C in rice and Arabidopsis.</title>
        <authorList>
            <person name="Xue T."/>
            <person name="Wang D."/>
            <person name="Zhang S."/>
            <person name="Ehlting J."/>
            <person name="Ni F."/>
            <person name="Jacab S."/>
            <person name="Zheng C."/>
            <person name="Zhong Y."/>
        </authorList>
    </citation>
    <scope>GENE FAMILY</scope>
    <scope>NOMENCLATURE</scope>
</reference>
<name>P2C22_ORYSJ</name>
<proteinExistence type="inferred from homology"/>
<gene>
    <name type="ordered locus">Os02g0607500</name>
    <name type="ordered locus">LOC_Os02g39480</name>
    <name type="ORF">OsJ_007238</name>
    <name type="ORF">OSJNBa0030C08.21</name>
</gene>
<keyword id="KW-0378">Hydrolase</keyword>
<keyword id="KW-0460">Magnesium</keyword>
<keyword id="KW-0464">Manganese</keyword>
<keyword id="KW-0479">Metal-binding</keyword>
<keyword id="KW-0904">Protein phosphatase</keyword>
<keyword id="KW-1185">Reference proteome</keyword>
<keyword id="KW-0732">Signal</keyword>
<dbReference type="EC" id="3.1.3.16"/>
<dbReference type="EMBL" id="AP006438">
    <property type="protein sequence ID" value="BAD20141.1"/>
    <property type="status" value="ALT_SEQ"/>
    <property type="molecule type" value="Genomic_DNA"/>
</dbReference>
<dbReference type="EMBL" id="AP014958">
    <property type="protein sequence ID" value="BAS79677.1"/>
    <property type="molecule type" value="Genomic_DNA"/>
</dbReference>
<dbReference type="EMBL" id="CM000139">
    <property type="status" value="NOT_ANNOTATED_CDS"/>
    <property type="molecule type" value="Genomic_DNA"/>
</dbReference>
<dbReference type="SMR" id="A3A8W6"/>
<dbReference type="STRING" id="39947.A3A8W6"/>
<dbReference type="PaxDb" id="39947-A3A8W6"/>
<dbReference type="EnsemblPlants" id="Os02t0607500-00">
    <property type="protein sequence ID" value="Os02t0607500-00"/>
    <property type="gene ID" value="Os02g0607500"/>
</dbReference>
<dbReference type="Gramene" id="Os02t0607500-00">
    <property type="protein sequence ID" value="Os02t0607500-00"/>
    <property type="gene ID" value="Os02g0607500"/>
</dbReference>
<dbReference type="eggNOG" id="KOG0698">
    <property type="taxonomic scope" value="Eukaryota"/>
</dbReference>
<dbReference type="HOGENOM" id="CLU_013173_18_0_1"/>
<dbReference type="InParanoid" id="A3A8W6"/>
<dbReference type="OMA" id="EHYDPHG"/>
<dbReference type="Proteomes" id="UP000000763">
    <property type="component" value="Chromosome 2"/>
</dbReference>
<dbReference type="Proteomes" id="UP000007752">
    <property type="component" value="Chromosome 2"/>
</dbReference>
<dbReference type="Proteomes" id="UP000059680">
    <property type="component" value="Chromosome 2"/>
</dbReference>
<dbReference type="GO" id="GO:0046872">
    <property type="term" value="F:metal ion binding"/>
    <property type="evidence" value="ECO:0007669"/>
    <property type="project" value="UniProtKB-KW"/>
</dbReference>
<dbReference type="GO" id="GO:0004722">
    <property type="term" value="F:protein serine/threonine phosphatase activity"/>
    <property type="evidence" value="ECO:0007669"/>
    <property type="project" value="UniProtKB-EC"/>
</dbReference>
<dbReference type="GO" id="GO:0007165">
    <property type="term" value="P:signal transduction"/>
    <property type="evidence" value="ECO:0000318"/>
    <property type="project" value="GO_Central"/>
</dbReference>
<dbReference type="CDD" id="cd00143">
    <property type="entry name" value="PP2Cc"/>
    <property type="match status" value="1"/>
</dbReference>
<dbReference type="FunFam" id="3.60.40.10:FF:000056">
    <property type="entry name" value="Probable protein phosphatase 2C 18"/>
    <property type="match status" value="1"/>
</dbReference>
<dbReference type="Gene3D" id="3.60.40.10">
    <property type="entry name" value="PPM-type phosphatase domain"/>
    <property type="match status" value="1"/>
</dbReference>
<dbReference type="InterPro" id="IPR015655">
    <property type="entry name" value="PP2C"/>
</dbReference>
<dbReference type="InterPro" id="IPR000222">
    <property type="entry name" value="PP2C_BS"/>
</dbReference>
<dbReference type="InterPro" id="IPR036457">
    <property type="entry name" value="PPM-type-like_dom_sf"/>
</dbReference>
<dbReference type="InterPro" id="IPR001932">
    <property type="entry name" value="PPM-type_phosphatase-like_dom"/>
</dbReference>
<dbReference type="PANTHER" id="PTHR13832">
    <property type="entry name" value="PROTEIN PHOSPHATASE 2C"/>
    <property type="match status" value="1"/>
</dbReference>
<dbReference type="PANTHER" id="PTHR13832:SF285">
    <property type="entry name" value="PROTEIN PHOSPHATASE 2C 22-RELATED"/>
    <property type="match status" value="1"/>
</dbReference>
<dbReference type="Pfam" id="PF00481">
    <property type="entry name" value="PP2C"/>
    <property type="match status" value="1"/>
</dbReference>
<dbReference type="SMART" id="SM00332">
    <property type="entry name" value="PP2Cc"/>
    <property type="match status" value="1"/>
</dbReference>
<dbReference type="SUPFAM" id="SSF81606">
    <property type="entry name" value="PP2C-like"/>
    <property type="match status" value="1"/>
</dbReference>
<dbReference type="PROSITE" id="PS01032">
    <property type="entry name" value="PPM_1"/>
    <property type="match status" value="1"/>
</dbReference>
<dbReference type="PROSITE" id="PS51746">
    <property type="entry name" value="PPM_2"/>
    <property type="match status" value="1"/>
</dbReference>
<feature type="signal peptide" evidence="2">
    <location>
        <begin position="1"/>
        <end position="21"/>
    </location>
</feature>
<feature type="chain" id="PRO_0000363268" description="Putative protein phosphatase 2C 22">
    <location>
        <begin position="22"/>
        <end position="581"/>
    </location>
</feature>
<feature type="domain" description="PPM-type phosphatase" evidence="3">
    <location>
        <begin position="102"/>
        <end position="478"/>
    </location>
</feature>
<feature type="region of interest" description="Disordered" evidence="4">
    <location>
        <begin position="538"/>
        <end position="563"/>
    </location>
</feature>
<feature type="binding site" evidence="1">
    <location>
        <position position="138"/>
    </location>
    <ligand>
        <name>Mn(2+)</name>
        <dbReference type="ChEBI" id="CHEBI:29035"/>
        <label>1</label>
    </ligand>
</feature>
<feature type="binding site" evidence="1">
    <location>
        <position position="138"/>
    </location>
    <ligand>
        <name>Mn(2+)</name>
        <dbReference type="ChEBI" id="CHEBI:29035"/>
        <label>2</label>
    </ligand>
</feature>
<feature type="binding site" evidence="1">
    <location>
        <position position="139"/>
    </location>
    <ligand>
        <name>Mn(2+)</name>
        <dbReference type="ChEBI" id="CHEBI:29035"/>
        <label>1</label>
    </ligand>
</feature>
<feature type="binding site" evidence="1">
    <location>
        <position position="373"/>
    </location>
    <ligand>
        <name>Mn(2+)</name>
        <dbReference type="ChEBI" id="CHEBI:29035"/>
        <label>2</label>
    </ligand>
</feature>
<feature type="binding site" evidence="1">
    <location>
        <position position="469"/>
    </location>
    <ligand>
        <name>Mn(2+)</name>
        <dbReference type="ChEBI" id="CHEBI:29035"/>
        <label>2</label>
    </ligand>
</feature>
<protein>
    <recommendedName>
        <fullName>Putative protein phosphatase 2C 22</fullName>
        <shortName>OsPP2C22</shortName>
        <ecNumber>3.1.3.16</ecNumber>
    </recommendedName>
</protein>
<accession>A3A8W6</accession>
<accession>A0A0P0VLR6</accession>
<accession>Q6K1Z0</accession>
<organism>
    <name type="scientific">Oryza sativa subsp. japonica</name>
    <name type="common">Rice</name>
    <dbReference type="NCBI Taxonomy" id="39947"/>
    <lineage>
        <taxon>Eukaryota</taxon>
        <taxon>Viridiplantae</taxon>
        <taxon>Streptophyta</taxon>
        <taxon>Embryophyta</taxon>
        <taxon>Tracheophyta</taxon>
        <taxon>Spermatophyta</taxon>
        <taxon>Magnoliopsida</taxon>
        <taxon>Liliopsida</taxon>
        <taxon>Poales</taxon>
        <taxon>Poaceae</taxon>
        <taxon>BOP clade</taxon>
        <taxon>Oryzoideae</taxon>
        <taxon>Oryzeae</taxon>
        <taxon>Oryzinae</taxon>
        <taxon>Oryza</taxon>
        <taxon>Oryza sativa</taxon>
    </lineage>
</organism>
<comment type="catalytic activity">
    <reaction>
        <text>O-phospho-L-seryl-[protein] + H2O = L-seryl-[protein] + phosphate</text>
        <dbReference type="Rhea" id="RHEA:20629"/>
        <dbReference type="Rhea" id="RHEA-COMP:9863"/>
        <dbReference type="Rhea" id="RHEA-COMP:11604"/>
        <dbReference type="ChEBI" id="CHEBI:15377"/>
        <dbReference type="ChEBI" id="CHEBI:29999"/>
        <dbReference type="ChEBI" id="CHEBI:43474"/>
        <dbReference type="ChEBI" id="CHEBI:83421"/>
        <dbReference type="EC" id="3.1.3.16"/>
    </reaction>
</comment>
<comment type="catalytic activity">
    <reaction>
        <text>O-phospho-L-threonyl-[protein] + H2O = L-threonyl-[protein] + phosphate</text>
        <dbReference type="Rhea" id="RHEA:47004"/>
        <dbReference type="Rhea" id="RHEA-COMP:11060"/>
        <dbReference type="Rhea" id="RHEA-COMP:11605"/>
        <dbReference type="ChEBI" id="CHEBI:15377"/>
        <dbReference type="ChEBI" id="CHEBI:30013"/>
        <dbReference type="ChEBI" id="CHEBI:43474"/>
        <dbReference type="ChEBI" id="CHEBI:61977"/>
        <dbReference type="EC" id="3.1.3.16"/>
    </reaction>
</comment>
<comment type="cofactor">
    <cofactor evidence="1">
        <name>Mg(2+)</name>
        <dbReference type="ChEBI" id="CHEBI:18420"/>
    </cofactor>
    <cofactor evidence="1">
        <name>Mn(2+)</name>
        <dbReference type="ChEBI" id="CHEBI:29035"/>
    </cofactor>
    <text evidence="1">Binds 2 magnesium or manganese ions per subunit.</text>
</comment>
<comment type="similarity">
    <text evidence="5">Belongs to the PP2C family.</text>
</comment>
<comment type="sequence caution" evidence="5">
    <conflict type="erroneous gene model prediction">
        <sequence resource="EMBL-CDS" id="BAD20141"/>
    </conflict>
</comment>